<reference key="1">
    <citation type="journal article" date="2002" name="Nature">
        <title>The genome sequence of Schizosaccharomyces pombe.</title>
        <authorList>
            <person name="Wood V."/>
            <person name="Gwilliam R."/>
            <person name="Rajandream M.A."/>
            <person name="Lyne M.H."/>
            <person name="Lyne R."/>
            <person name="Stewart A."/>
            <person name="Sgouros J.G."/>
            <person name="Peat N."/>
            <person name="Hayles J."/>
            <person name="Baker S.G."/>
            <person name="Basham D."/>
            <person name="Bowman S."/>
            <person name="Brooks K."/>
            <person name="Brown D."/>
            <person name="Brown S."/>
            <person name="Chillingworth T."/>
            <person name="Churcher C.M."/>
            <person name="Collins M."/>
            <person name="Connor R."/>
            <person name="Cronin A."/>
            <person name="Davis P."/>
            <person name="Feltwell T."/>
            <person name="Fraser A."/>
            <person name="Gentles S."/>
            <person name="Goble A."/>
            <person name="Hamlin N."/>
            <person name="Harris D.E."/>
            <person name="Hidalgo J."/>
            <person name="Hodgson G."/>
            <person name="Holroyd S."/>
            <person name="Hornsby T."/>
            <person name="Howarth S."/>
            <person name="Huckle E.J."/>
            <person name="Hunt S."/>
            <person name="Jagels K."/>
            <person name="James K.D."/>
            <person name="Jones L."/>
            <person name="Jones M."/>
            <person name="Leather S."/>
            <person name="McDonald S."/>
            <person name="McLean J."/>
            <person name="Mooney P."/>
            <person name="Moule S."/>
            <person name="Mungall K.L."/>
            <person name="Murphy L.D."/>
            <person name="Niblett D."/>
            <person name="Odell C."/>
            <person name="Oliver K."/>
            <person name="O'Neil S."/>
            <person name="Pearson D."/>
            <person name="Quail M.A."/>
            <person name="Rabbinowitsch E."/>
            <person name="Rutherford K.M."/>
            <person name="Rutter S."/>
            <person name="Saunders D."/>
            <person name="Seeger K."/>
            <person name="Sharp S."/>
            <person name="Skelton J."/>
            <person name="Simmonds M.N."/>
            <person name="Squares R."/>
            <person name="Squares S."/>
            <person name="Stevens K."/>
            <person name="Taylor K."/>
            <person name="Taylor R.G."/>
            <person name="Tivey A."/>
            <person name="Walsh S.V."/>
            <person name="Warren T."/>
            <person name="Whitehead S."/>
            <person name="Woodward J.R."/>
            <person name="Volckaert G."/>
            <person name="Aert R."/>
            <person name="Robben J."/>
            <person name="Grymonprez B."/>
            <person name="Weltjens I."/>
            <person name="Vanstreels E."/>
            <person name="Rieger M."/>
            <person name="Schaefer M."/>
            <person name="Mueller-Auer S."/>
            <person name="Gabel C."/>
            <person name="Fuchs M."/>
            <person name="Duesterhoeft A."/>
            <person name="Fritzc C."/>
            <person name="Holzer E."/>
            <person name="Moestl D."/>
            <person name="Hilbert H."/>
            <person name="Borzym K."/>
            <person name="Langer I."/>
            <person name="Beck A."/>
            <person name="Lehrach H."/>
            <person name="Reinhardt R."/>
            <person name="Pohl T.M."/>
            <person name="Eger P."/>
            <person name="Zimmermann W."/>
            <person name="Wedler H."/>
            <person name="Wambutt R."/>
            <person name="Purnelle B."/>
            <person name="Goffeau A."/>
            <person name="Cadieu E."/>
            <person name="Dreano S."/>
            <person name="Gloux S."/>
            <person name="Lelaure V."/>
            <person name="Mottier S."/>
            <person name="Galibert F."/>
            <person name="Aves S.J."/>
            <person name="Xiang Z."/>
            <person name="Hunt C."/>
            <person name="Moore K."/>
            <person name="Hurst S.M."/>
            <person name="Lucas M."/>
            <person name="Rochet M."/>
            <person name="Gaillardin C."/>
            <person name="Tallada V.A."/>
            <person name="Garzon A."/>
            <person name="Thode G."/>
            <person name="Daga R.R."/>
            <person name="Cruzado L."/>
            <person name="Jimenez J."/>
            <person name="Sanchez M."/>
            <person name="del Rey F."/>
            <person name="Benito J."/>
            <person name="Dominguez A."/>
            <person name="Revuelta J.L."/>
            <person name="Moreno S."/>
            <person name="Armstrong J."/>
            <person name="Forsburg S.L."/>
            <person name="Cerutti L."/>
            <person name="Lowe T."/>
            <person name="McCombie W.R."/>
            <person name="Paulsen I."/>
            <person name="Potashkin J."/>
            <person name="Shpakovski G.V."/>
            <person name="Ussery D."/>
            <person name="Barrell B.G."/>
            <person name="Nurse P."/>
        </authorList>
    </citation>
    <scope>NUCLEOTIDE SEQUENCE [LARGE SCALE GENOMIC DNA]</scope>
    <source>
        <strain>972 / ATCC 24843</strain>
    </source>
</reference>
<reference key="2">
    <citation type="journal article" date="2006" name="Nat. Biotechnol.">
        <title>ORFeome cloning and global analysis of protein localization in the fission yeast Schizosaccharomyces pombe.</title>
        <authorList>
            <person name="Matsuyama A."/>
            <person name="Arai R."/>
            <person name="Yashiroda Y."/>
            <person name="Shirai A."/>
            <person name="Kamata A."/>
            <person name="Sekido S."/>
            <person name="Kobayashi Y."/>
            <person name="Hashimoto A."/>
            <person name="Hamamoto M."/>
            <person name="Hiraoka Y."/>
            <person name="Horinouchi S."/>
            <person name="Yoshida M."/>
        </authorList>
    </citation>
    <scope>SUBCELLULAR LOCATION [LARGE SCALE ANALYSIS]</scope>
</reference>
<organism>
    <name type="scientific">Schizosaccharomyces pombe (strain 972 / ATCC 24843)</name>
    <name type="common">Fission yeast</name>
    <dbReference type="NCBI Taxonomy" id="284812"/>
    <lineage>
        <taxon>Eukaryota</taxon>
        <taxon>Fungi</taxon>
        <taxon>Dikarya</taxon>
        <taxon>Ascomycota</taxon>
        <taxon>Taphrinomycotina</taxon>
        <taxon>Schizosaccharomycetes</taxon>
        <taxon>Schizosaccharomycetales</taxon>
        <taxon>Schizosaccharomycetaceae</taxon>
        <taxon>Schizosaccharomyces</taxon>
    </lineage>
</organism>
<keyword id="KW-0963">Cytoplasm</keyword>
<keyword id="KW-0436">Ligase</keyword>
<keyword id="KW-1185">Reference proteome</keyword>
<keyword id="KW-0819">tRNA processing</keyword>
<sequence length="787" mass="90343">MTRDQRVCIFGEKKSTVRSVTFKAPKSNYDLTSWRIWEQAFRLNVSNSKKCFDTISGHRITLPTNARGLFTGYDYESKRHRIVIRGYDKFFNIDEVPITTWDALSQHTKGPYELTVKENGCIIFIAALPDGQIIVSSKHSLGIVEGQSVSHANVGERWLEKHLQSVGRTKQELAHELLRRDMTAVAELCDDEFEEHILPYTGNSRGLYLHGLNRNCPQFITASSCEVAEFAEQWGFMKVSSFFMDSIHELKAFLENASKDGKWNNRAIEGFVIRCHSDHSSLEQQSSNDFFFKYKFPEPYGMFRQWREVTKMLISGKKPSYTKYKKVTAEYITFCDKKFKEDEDAKRLYMSNKGIISLRDEFLVLSKLDLMHLSVSNDNDCGKEFTLLVPIATIGCGKTTVAKILEKLFGWPVVQNDNLPSGKGGPKRFAKAIIEEFRNGHSVVFADRNNHISNMRSTLQTDILALIDGVRFVALPFKHTPEVPEFVQNRVLQRGDRHQSIKVSEGVDKVKAIMNTFYKQYKPFDPAGNKHDANYDDIIELDPLIGSLENARRIVNYFKKNIPELIPNDPSDDDYAAALNYAVNEYVPTYRKTFGNDSKKIKNKITAEGITGSSTCFKKAPRYFGVLLDRKTVESSLVQVLTIANLQWQEAFSRYTLQDSFHITMIHESQKPVNSRIWEQYLQHMHDKNTTKMGNISFRITHLVWDDRVICFRVTMNENSVWYGKTCNPQLHITLGTSSSDVKAFESNFLLKKLRWQGDEVDSTDGNVRYLTVLPKIIIEGMLEPVY</sequence>
<protein>
    <recommendedName>
        <fullName>tRNA ligase 1</fullName>
        <ecNumber evidence="3">6.5.1.3</ecNumber>
    </recommendedName>
</protein>
<dbReference type="EC" id="6.5.1.3" evidence="3"/>
<dbReference type="EMBL" id="CU329670">
    <property type="protein sequence ID" value="CAA93622.2"/>
    <property type="molecule type" value="Genomic_DNA"/>
</dbReference>
<dbReference type="PIR" id="T39034">
    <property type="entry name" value="T39034"/>
</dbReference>
<dbReference type="RefSeq" id="NP_593724.2">
    <property type="nucleotide sequence ID" value="NM_001019155.2"/>
</dbReference>
<dbReference type="SMR" id="Q10313"/>
<dbReference type="BioGRID" id="278634">
    <property type="interactions" value="1"/>
</dbReference>
<dbReference type="FunCoup" id="Q10313">
    <property type="interactions" value="327"/>
</dbReference>
<dbReference type="STRING" id="284812.Q10313"/>
<dbReference type="PaxDb" id="4896-SPAC17G8.01c.1"/>
<dbReference type="EnsemblFungi" id="SPAC17G8.01c.1">
    <property type="protein sequence ID" value="SPAC17G8.01c.1:pep"/>
    <property type="gene ID" value="SPAC17G8.01c"/>
</dbReference>
<dbReference type="PomBase" id="SPAC17G8.01c">
    <property type="gene designation" value="trl1"/>
</dbReference>
<dbReference type="VEuPathDB" id="FungiDB:SPAC17G8.01c"/>
<dbReference type="eggNOG" id="ENOG502QQB9">
    <property type="taxonomic scope" value="Eukaryota"/>
</dbReference>
<dbReference type="HOGENOM" id="CLU_010316_1_0_1"/>
<dbReference type="InParanoid" id="Q10313"/>
<dbReference type="OMA" id="FHITLCH"/>
<dbReference type="PhylomeDB" id="Q10313"/>
<dbReference type="PRO" id="PR:Q10313"/>
<dbReference type="Proteomes" id="UP000002485">
    <property type="component" value="Chromosome I"/>
</dbReference>
<dbReference type="GO" id="GO:0005829">
    <property type="term" value="C:cytosol"/>
    <property type="evidence" value="ECO:0007005"/>
    <property type="project" value="PomBase"/>
</dbReference>
<dbReference type="GO" id="GO:0005634">
    <property type="term" value="C:nucleus"/>
    <property type="evidence" value="ECO:0000318"/>
    <property type="project" value="GO_Central"/>
</dbReference>
<dbReference type="GO" id="GO:0004113">
    <property type="term" value="F:2',3'-cyclic-nucleotide 3'-phosphodiesterase activity"/>
    <property type="evidence" value="ECO:0000266"/>
    <property type="project" value="PomBase"/>
</dbReference>
<dbReference type="GO" id="GO:0005524">
    <property type="term" value="F:ATP binding"/>
    <property type="evidence" value="ECO:0007669"/>
    <property type="project" value="InterPro"/>
</dbReference>
<dbReference type="GO" id="GO:0051730">
    <property type="term" value="F:GTP-dependent polyribonucleotide 5'-hydroxyl-kinase activity"/>
    <property type="evidence" value="ECO:0000266"/>
    <property type="project" value="PomBase"/>
</dbReference>
<dbReference type="GO" id="GO:0003972">
    <property type="term" value="F:RNA ligase (ATP) activity"/>
    <property type="evidence" value="ECO:0000318"/>
    <property type="project" value="GO_Central"/>
</dbReference>
<dbReference type="GO" id="GO:0006388">
    <property type="term" value="P:tRNA splicing, via endonucleolytic cleavage and ligation"/>
    <property type="evidence" value="ECO:0000318"/>
    <property type="project" value="GO_Central"/>
</dbReference>
<dbReference type="Gene3D" id="3.40.50.300">
    <property type="entry name" value="P-loop containing nucleotide triphosphate hydrolases"/>
    <property type="match status" value="1"/>
</dbReference>
<dbReference type="InterPro" id="IPR027417">
    <property type="entry name" value="P-loop_NTPase"/>
</dbReference>
<dbReference type="InterPro" id="IPR019039">
    <property type="entry name" value="T4-Rnl1-like_N"/>
</dbReference>
<dbReference type="InterPro" id="IPR012387">
    <property type="entry name" value="Trl1_fun"/>
</dbReference>
<dbReference type="InterPro" id="IPR015966">
    <property type="entry name" value="tRNA_lig_kin_fungi"/>
</dbReference>
<dbReference type="InterPro" id="IPR015965">
    <property type="entry name" value="tRNA_lig_PDEase"/>
</dbReference>
<dbReference type="PANTHER" id="PTHR32004">
    <property type="entry name" value="TRNA LIGASE"/>
    <property type="match status" value="1"/>
</dbReference>
<dbReference type="PANTHER" id="PTHR32004:SF1">
    <property type="entry name" value="TRNA LIGASE"/>
    <property type="match status" value="1"/>
</dbReference>
<dbReference type="Pfam" id="PF09511">
    <property type="entry name" value="RNA_lig_T4_1"/>
    <property type="match status" value="1"/>
</dbReference>
<dbReference type="Pfam" id="PF08302">
    <property type="entry name" value="tRNA_lig_CPD"/>
    <property type="match status" value="1"/>
</dbReference>
<dbReference type="Pfam" id="PF08303">
    <property type="entry name" value="tRNA_lig_kinase"/>
    <property type="match status" value="1"/>
</dbReference>
<dbReference type="PIRSF" id="PIRSF019634">
    <property type="entry name" value="tRNA_lig_yeast"/>
    <property type="match status" value="1"/>
</dbReference>
<dbReference type="SUPFAM" id="SSF52540">
    <property type="entry name" value="P-loop containing nucleoside triphosphate hydrolases"/>
    <property type="match status" value="1"/>
</dbReference>
<comment type="function">
    <text evidence="1">Required for the splicing of precursor tRNA molecules containing introns. The ligation activity requires three enzymatic activities: phosphorylation of the 5' terminus of the 3' half-tRNA in the presence of ATP, opening of the 2'3'-cyclic phosphodiester bond of the 5' half-tRNA leaving a 2'-phosphomonoester and ligation of the two tRNA halves in an ATP-dependent reaction.</text>
</comment>
<comment type="catalytic activity">
    <reaction evidence="3">
        <text>ATP + (ribonucleotide)n-3'-hydroxyl + 5'-phospho-(ribonucleotide)m = (ribonucleotide)n+m + AMP + diphosphate.</text>
        <dbReference type="EC" id="6.5.1.3"/>
    </reaction>
</comment>
<comment type="subcellular location">
    <subcellularLocation>
        <location evidence="2">Cytoplasm</location>
    </subcellularLocation>
</comment>
<comment type="domain">
    <text evidence="1">Has three domain each corresponding to an enzymatic activity, namely in N- to C-terminal order: ligase, kinase and cyclic phosphodiesterase (CPDase).</text>
</comment>
<comment type="similarity">
    <text evidence="3">Belongs to the TRL1 family.</text>
</comment>
<gene>
    <name type="primary">trl1</name>
    <name type="ORF">SPAC17G8.01c</name>
    <name type="ORF">SPAC6C3.10c</name>
</gene>
<accession>Q10313</accession>
<accession>Q7Z990</accession>
<name>TRNL_SCHPO</name>
<proteinExistence type="inferred from homology"/>
<feature type="chain" id="PRO_0000116589" description="tRNA ligase 1">
    <location>
        <begin position="1"/>
        <end position="787"/>
    </location>
</feature>
<feature type="active site" description="N6-AMP-lysine intermediate" evidence="1">
    <location>
        <position position="117"/>
    </location>
</feature>
<evidence type="ECO:0000250" key="1"/>
<evidence type="ECO:0000269" key="2">
    <source>
    </source>
</evidence>
<evidence type="ECO:0000305" key="3"/>